<gene>
    <name evidence="1" type="primary">rpo3</name>
    <name evidence="1" type="synonym">rpoD</name>
    <name type="ordered locus">Msm_1428</name>
</gene>
<feature type="chain" id="PRO_1000005787" description="DNA-directed RNA polymerase subunit Rpo3">
    <location>
        <begin position="1"/>
        <end position="274"/>
    </location>
</feature>
<feature type="binding site" evidence="1">
    <location>
        <position position="202"/>
    </location>
    <ligand>
        <name>[3Fe-4S] cluster</name>
        <dbReference type="ChEBI" id="CHEBI:21137"/>
    </ligand>
</feature>
<feature type="binding site" evidence="1">
    <location>
        <position position="205"/>
    </location>
    <ligand>
        <name>[3Fe-4S] cluster</name>
        <dbReference type="ChEBI" id="CHEBI:21137"/>
    </ligand>
</feature>
<feature type="binding site" evidence="1">
    <location>
        <position position="208"/>
    </location>
    <ligand>
        <name>[3Fe-4S] cluster</name>
        <dbReference type="ChEBI" id="CHEBI:21137"/>
    </ligand>
</feature>
<comment type="function">
    <text evidence="1">DNA-dependent RNA polymerase (RNAP) catalyzes the transcription of DNA into RNA using the four ribonucleoside triphosphates as substrates.</text>
</comment>
<comment type="catalytic activity">
    <reaction evidence="1">
        <text>RNA(n) + a ribonucleoside 5'-triphosphate = RNA(n+1) + diphosphate</text>
        <dbReference type="Rhea" id="RHEA:21248"/>
        <dbReference type="Rhea" id="RHEA-COMP:14527"/>
        <dbReference type="Rhea" id="RHEA-COMP:17342"/>
        <dbReference type="ChEBI" id="CHEBI:33019"/>
        <dbReference type="ChEBI" id="CHEBI:61557"/>
        <dbReference type="ChEBI" id="CHEBI:140395"/>
        <dbReference type="EC" id="2.7.7.6"/>
    </reaction>
</comment>
<comment type="cofactor">
    <cofactor evidence="1">
        <name>[3Fe-4S] cluster</name>
        <dbReference type="ChEBI" id="CHEBI:21137"/>
    </cofactor>
    <text evidence="1">Binds 1 [3Fe-4S] cluster.</text>
</comment>
<comment type="subunit">
    <text evidence="1">Part of the RNA polymerase complex.</text>
</comment>
<comment type="subcellular location">
    <subcellularLocation>
        <location evidence="1">Cytoplasm</location>
    </subcellularLocation>
</comment>
<comment type="similarity">
    <text evidence="1">Belongs to the archaeal Rpo3/eukaryotic RPB3 RNA polymerase subunit family.</text>
</comment>
<comment type="caution">
    <text evidence="2">X-ray crystallography in other archaea shows this protein binds a 3Fe-4S cluster, although a 4Fe-4S cluster has been suggested to be present in this protein.</text>
</comment>
<dbReference type="EC" id="2.7.7.6" evidence="1"/>
<dbReference type="EMBL" id="CP000678">
    <property type="protein sequence ID" value="ABQ87633.1"/>
    <property type="molecule type" value="Genomic_DNA"/>
</dbReference>
<dbReference type="RefSeq" id="WP_004033266.1">
    <property type="nucleotide sequence ID" value="NZ_CP117965.1"/>
</dbReference>
<dbReference type="SMR" id="A5UN55"/>
<dbReference type="STRING" id="420247.Msm_1428"/>
<dbReference type="EnsemblBacteria" id="ABQ87633">
    <property type="protein sequence ID" value="ABQ87633"/>
    <property type="gene ID" value="Msm_1428"/>
</dbReference>
<dbReference type="KEGG" id="msi:Msm_1428"/>
<dbReference type="PATRIC" id="fig|420247.28.peg.1422"/>
<dbReference type="eggNOG" id="arCOG04241">
    <property type="taxonomic scope" value="Archaea"/>
</dbReference>
<dbReference type="HOGENOM" id="CLU_038421_3_1_2"/>
<dbReference type="Proteomes" id="UP000001992">
    <property type="component" value="Chromosome"/>
</dbReference>
<dbReference type="GO" id="GO:0005737">
    <property type="term" value="C:cytoplasm"/>
    <property type="evidence" value="ECO:0007669"/>
    <property type="project" value="UniProtKB-SubCell"/>
</dbReference>
<dbReference type="GO" id="GO:0000428">
    <property type="term" value="C:DNA-directed RNA polymerase complex"/>
    <property type="evidence" value="ECO:0007669"/>
    <property type="project" value="UniProtKB-KW"/>
</dbReference>
<dbReference type="GO" id="GO:0051538">
    <property type="term" value="F:3 iron, 4 sulfur cluster binding"/>
    <property type="evidence" value="ECO:0007669"/>
    <property type="project" value="UniProtKB-KW"/>
</dbReference>
<dbReference type="GO" id="GO:0003677">
    <property type="term" value="F:DNA binding"/>
    <property type="evidence" value="ECO:0007669"/>
    <property type="project" value="UniProtKB-UniRule"/>
</dbReference>
<dbReference type="GO" id="GO:0003899">
    <property type="term" value="F:DNA-directed RNA polymerase activity"/>
    <property type="evidence" value="ECO:0007669"/>
    <property type="project" value="UniProtKB-UniRule"/>
</dbReference>
<dbReference type="GO" id="GO:0046872">
    <property type="term" value="F:metal ion binding"/>
    <property type="evidence" value="ECO:0007669"/>
    <property type="project" value="UniProtKB-KW"/>
</dbReference>
<dbReference type="GO" id="GO:0046983">
    <property type="term" value="F:protein dimerization activity"/>
    <property type="evidence" value="ECO:0007669"/>
    <property type="project" value="InterPro"/>
</dbReference>
<dbReference type="GO" id="GO:0006351">
    <property type="term" value="P:DNA-templated transcription"/>
    <property type="evidence" value="ECO:0007669"/>
    <property type="project" value="UniProtKB-UniRule"/>
</dbReference>
<dbReference type="CDD" id="cd07030">
    <property type="entry name" value="RNAP_D"/>
    <property type="match status" value="1"/>
</dbReference>
<dbReference type="Gene3D" id="3.30.70.3110">
    <property type="match status" value="1"/>
</dbReference>
<dbReference type="Gene3D" id="2.170.120.12">
    <property type="entry name" value="DNA-directed RNA polymerase, insert domain"/>
    <property type="match status" value="1"/>
</dbReference>
<dbReference type="Gene3D" id="3.30.1360.10">
    <property type="entry name" value="RNA polymerase, RBP11-like subunit"/>
    <property type="match status" value="1"/>
</dbReference>
<dbReference type="HAMAP" id="MF_00320">
    <property type="entry name" value="RNApol_arch_Rpo3"/>
    <property type="match status" value="1"/>
</dbReference>
<dbReference type="InterPro" id="IPR011262">
    <property type="entry name" value="DNA-dir_RNA_pol_insert"/>
</dbReference>
<dbReference type="InterPro" id="IPR011263">
    <property type="entry name" value="DNA-dir_RNA_pol_RpoA/D/Rpb3"/>
</dbReference>
<dbReference type="InterPro" id="IPR036603">
    <property type="entry name" value="RBP11-like"/>
</dbReference>
<dbReference type="InterPro" id="IPR022842">
    <property type="entry name" value="RNAP_Rpo3/Rpb3/RPAC1"/>
</dbReference>
<dbReference type="InterPro" id="IPR036643">
    <property type="entry name" value="RNApol_insert_sf"/>
</dbReference>
<dbReference type="InterPro" id="IPR050518">
    <property type="entry name" value="Rpo3/RPB3_RNA_Pol_subunit"/>
</dbReference>
<dbReference type="NCBIfam" id="NF001988">
    <property type="entry name" value="PRK00783.1"/>
    <property type="match status" value="1"/>
</dbReference>
<dbReference type="PANTHER" id="PTHR11800">
    <property type="entry name" value="DNA-DIRECTED RNA POLYMERASE"/>
    <property type="match status" value="1"/>
</dbReference>
<dbReference type="PANTHER" id="PTHR11800:SF2">
    <property type="entry name" value="DNA-DIRECTED RNA POLYMERASE II SUBUNIT RPB3"/>
    <property type="match status" value="1"/>
</dbReference>
<dbReference type="Pfam" id="PF01000">
    <property type="entry name" value="RNA_pol_A_bac"/>
    <property type="match status" value="1"/>
</dbReference>
<dbReference type="Pfam" id="PF01193">
    <property type="entry name" value="RNA_pol_L"/>
    <property type="match status" value="1"/>
</dbReference>
<dbReference type="SMART" id="SM00662">
    <property type="entry name" value="RPOLD"/>
    <property type="match status" value="1"/>
</dbReference>
<dbReference type="SUPFAM" id="SSF56553">
    <property type="entry name" value="Insert subdomain of RNA polymerase alpha subunit"/>
    <property type="match status" value="1"/>
</dbReference>
<dbReference type="SUPFAM" id="SSF55257">
    <property type="entry name" value="RBP11-like subunits of RNA polymerase"/>
    <property type="match status" value="1"/>
</dbReference>
<reference key="1">
    <citation type="journal article" date="2007" name="Proc. Natl. Acad. Sci. U.S.A.">
        <title>Genomic and metabolic adaptations of Methanobrevibacter smithii to the human gut.</title>
        <authorList>
            <person name="Samuel B.S."/>
            <person name="Hansen E.E."/>
            <person name="Manchester J.K."/>
            <person name="Coutinho P.M."/>
            <person name="Henrissat B."/>
            <person name="Fulton R."/>
            <person name="Latreille P."/>
            <person name="Kim K."/>
            <person name="Wilson R.K."/>
            <person name="Gordon J.I."/>
        </authorList>
    </citation>
    <scope>NUCLEOTIDE SEQUENCE [LARGE SCALE GENOMIC DNA]</scope>
    <source>
        <strain>ATCC 35061 / DSM 861 / OCM 144 / PS</strain>
    </source>
</reference>
<accession>A5UN55</accession>
<evidence type="ECO:0000255" key="1">
    <source>
        <dbReference type="HAMAP-Rule" id="MF_00320"/>
    </source>
</evidence>
<evidence type="ECO:0000305" key="2"/>
<organism>
    <name type="scientific">Methanobrevibacter smithii (strain ATCC 35061 / DSM 861 / OCM 144 / PS)</name>
    <dbReference type="NCBI Taxonomy" id="420247"/>
    <lineage>
        <taxon>Archaea</taxon>
        <taxon>Methanobacteriati</taxon>
        <taxon>Methanobacteriota</taxon>
        <taxon>Methanomada group</taxon>
        <taxon>Methanobacteria</taxon>
        <taxon>Methanobacteriales</taxon>
        <taxon>Methanobacteriaceae</taxon>
        <taxon>Methanobrevibacter</taxon>
    </lineage>
</organism>
<keyword id="KW-0003">3Fe-4S</keyword>
<keyword id="KW-0963">Cytoplasm</keyword>
<keyword id="KW-0240">DNA-directed RNA polymerase</keyword>
<keyword id="KW-0408">Iron</keyword>
<keyword id="KW-0411">Iron-sulfur</keyword>
<keyword id="KW-0479">Metal-binding</keyword>
<keyword id="KW-0548">Nucleotidyltransferase</keyword>
<keyword id="KW-0804">Transcription</keyword>
<keyword id="KW-0808">Transferase</keyword>
<protein>
    <recommendedName>
        <fullName evidence="1">DNA-directed RNA polymerase subunit Rpo3</fullName>
        <ecNumber evidence="1">2.7.7.6</ecNumber>
    </recommendedName>
    <alternativeName>
        <fullName evidence="1">DNA-directed RNA polymerase subunit D</fullName>
    </alternativeName>
</protein>
<sequence>MEIEVKSQTDDEIVFIVRDAEVPFINAIRRCAMVNVPKIAIEDVNIMRNDSAMFNEVLAHRLGLTPLVSNMDAIEGLPLPGDDDYEENNSVMFSLKEEGPKVVYSKDLISSDSKIKPVYDTIPLVKLKEGEKLNIEAVAKVGYGKEHAKWMPTTVCVYKQYPEITFNEDVGIDYECADACPRGVLKSDKRSKEIKILDIEDCAMCKSCVRASIRNAQSEGKDESYINVGYHENDFIFRIETDGSMPPKEVLLQACDELGEKADKFIRFSEGGSK</sequence>
<proteinExistence type="inferred from homology"/>
<name>RPO3_METS3</name>